<dbReference type="EC" id="5.3.1.1" evidence="1"/>
<dbReference type="EMBL" id="CP000504">
    <property type="protein sequence ID" value="ABL88739.1"/>
    <property type="molecule type" value="Genomic_DNA"/>
</dbReference>
<dbReference type="RefSeq" id="WP_011763314.1">
    <property type="nucleotide sequence ID" value="NC_008701.1"/>
</dbReference>
<dbReference type="SMR" id="A1RUV7"/>
<dbReference type="STRING" id="384616.Pisl_1585"/>
<dbReference type="GeneID" id="4618165"/>
<dbReference type="KEGG" id="pis:Pisl_1585"/>
<dbReference type="eggNOG" id="arCOG01087">
    <property type="taxonomic scope" value="Archaea"/>
</dbReference>
<dbReference type="HOGENOM" id="CLU_104921_0_0_2"/>
<dbReference type="OrthoDB" id="9465at2157"/>
<dbReference type="UniPathway" id="UPA00109">
    <property type="reaction ID" value="UER00189"/>
</dbReference>
<dbReference type="UniPathway" id="UPA00138"/>
<dbReference type="Proteomes" id="UP000002595">
    <property type="component" value="Chromosome"/>
</dbReference>
<dbReference type="GO" id="GO:0005829">
    <property type="term" value="C:cytosol"/>
    <property type="evidence" value="ECO:0007669"/>
    <property type="project" value="TreeGrafter"/>
</dbReference>
<dbReference type="GO" id="GO:0004807">
    <property type="term" value="F:triose-phosphate isomerase activity"/>
    <property type="evidence" value="ECO:0007669"/>
    <property type="project" value="UniProtKB-UniRule"/>
</dbReference>
<dbReference type="GO" id="GO:0006094">
    <property type="term" value="P:gluconeogenesis"/>
    <property type="evidence" value="ECO:0007669"/>
    <property type="project" value="UniProtKB-UniRule"/>
</dbReference>
<dbReference type="GO" id="GO:0046166">
    <property type="term" value="P:glyceraldehyde-3-phosphate biosynthetic process"/>
    <property type="evidence" value="ECO:0007669"/>
    <property type="project" value="TreeGrafter"/>
</dbReference>
<dbReference type="GO" id="GO:0019563">
    <property type="term" value="P:glycerol catabolic process"/>
    <property type="evidence" value="ECO:0007669"/>
    <property type="project" value="TreeGrafter"/>
</dbReference>
<dbReference type="GO" id="GO:0006096">
    <property type="term" value="P:glycolytic process"/>
    <property type="evidence" value="ECO:0007669"/>
    <property type="project" value="UniProtKB-UniRule"/>
</dbReference>
<dbReference type="CDD" id="cd00311">
    <property type="entry name" value="TIM"/>
    <property type="match status" value="1"/>
</dbReference>
<dbReference type="FunFam" id="3.20.20.70:FF:000223">
    <property type="entry name" value="Triosephosphate isomerase"/>
    <property type="match status" value="1"/>
</dbReference>
<dbReference type="Gene3D" id="3.20.20.70">
    <property type="entry name" value="Aldolase class I"/>
    <property type="match status" value="1"/>
</dbReference>
<dbReference type="HAMAP" id="MF_00147_A">
    <property type="entry name" value="TIM_A"/>
    <property type="match status" value="1"/>
</dbReference>
<dbReference type="InterPro" id="IPR013785">
    <property type="entry name" value="Aldolase_TIM"/>
</dbReference>
<dbReference type="InterPro" id="IPR035990">
    <property type="entry name" value="TIM_sf"/>
</dbReference>
<dbReference type="InterPro" id="IPR000652">
    <property type="entry name" value="Triosephosphate_isomerase"/>
</dbReference>
<dbReference type="InterPro" id="IPR022891">
    <property type="entry name" value="Triosephosphate_isomerase_arc"/>
</dbReference>
<dbReference type="InterPro" id="IPR020861">
    <property type="entry name" value="Triosephosphate_isomerase_AS"/>
</dbReference>
<dbReference type="NCBIfam" id="NF003302">
    <property type="entry name" value="PRK04302.1"/>
    <property type="match status" value="1"/>
</dbReference>
<dbReference type="NCBIfam" id="TIGR00419">
    <property type="entry name" value="tim"/>
    <property type="match status" value="1"/>
</dbReference>
<dbReference type="PANTHER" id="PTHR21139">
    <property type="entry name" value="TRIOSEPHOSPHATE ISOMERASE"/>
    <property type="match status" value="1"/>
</dbReference>
<dbReference type="PANTHER" id="PTHR21139:SF42">
    <property type="entry name" value="TRIOSEPHOSPHATE ISOMERASE"/>
    <property type="match status" value="1"/>
</dbReference>
<dbReference type="Pfam" id="PF00121">
    <property type="entry name" value="TIM"/>
    <property type="match status" value="1"/>
</dbReference>
<dbReference type="SUPFAM" id="SSF51351">
    <property type="entry name" value="Triosephosphate isomerase (TIM)"/>
    <property type="match status" value="1"/>
</dbReference>
<dbReference type="PROSITE" id="PS00171">
    <property type="entry name" value="TIM_1"/>
    <property type="match status" value="1"/>
</dbReference>
<dbReference type="PROSITE" id="PS51440">
    <property type="entry name" value="TIM_2"/>
    <property type="match status" value="1"/>
</dbReference>
<keyword id="KW-0963">Cytoplasm</keyword>
<keyword id="KW-0312">Gluconeogenesis</keyword>
<keyword id="KW-0324">Glycolysis</keyword>
<keyword id="KW-0413">Isomerase</keyword>
<sequence length="229" mass="23588">MKFPILIINLKAYGEAAGKKALEIAKAAEKVAKELGVNIAVAPNHLELALVAQSVEIPVYAQGADVETPGAYTAHIAVDNIKAVGASGLILNHSEAPLALNQLSKLAARAKSIGLDVVICAPDPVTSLAAAALGPHAVAVEPPELIGTGKAVSKYKPETIIETVRLVTKHFPNVVVITGAGIETGEDVEAALKLGTKGVLLASAAVKAKDHYQKIFELAKPLTVAAEPP</sequence>
<feature type="chain" id="PRO_0000307610" description="Triosephosphate isomerase">
    <location>
        <begin position="1"/>
        <end position="229"/>
    </location>
</feature>
<feature type="active site" description="Electrophile" evidence="1">
    <location>
        <position position="93"/>
    </location>
</feature>
<feature type="active site" description="Proton acceptor" evidence="1">
    <location>
        <position position="141"/>
    </location>
</feature>
<feature type="binding site" evidence="1">
    <location>
        <begin position="9"/>
        <end position="11"/>
    </location>
    <ligand>
        <name>substrate</name>
    </ligand>
</feature>
<feature type="binding site" evidence="1">
    <location>
        <position position="146"/>
    </location>
    <ligand>
        <name>substrate</name>
    </ligand>
</feature>
<feature type="binding site" evidence="1">
    <location>
        <position position="181"/>
    </location>
    <ligand>
        <name>substrate</name>
    </ligand>
</feature>
<feature type="binding site" evidence="1">
    <location>
        <begin position="202"/>
        <end position="203"/>
    </location>
    <ligand>
        <name>substrate</name>
    </ligand>
</feature>
<evidence type="ECO:0000255" key="1">
    <source>
        <dbReference type="HAMAP-Rule" id="MF_00147"/>
    </source>
</evidence>
<accession>A1RUV7</accession>
<gene>
    <name evidence="1" type="primary">tpiA</name>
    <name type="ordered locus">Pisl_1585</name>
</gene>
<name>TPIS_PYRIL</name>
<protein>
    <recommendedName>
        <fullName evidence="1">Triosephosphate isomerase</fullName>
        <shortName evidence="1">TIM</shortName>
        <shortName evidence="1">TPI</shortName>
        <ecNumber evidence="1">5.3.1.1</ecNumber>
    </recommendedName>
    <alternativeName>
        <fullName evidence="1">Triose-phosphate isomerase</fullName>
    </alternativeName>
</protein>
<proteinExistence type="inferred from homology"/>
<organism>
    <name type="scientific">Pyrobaculum islandicum (strain DSM 4184 / JCM 9189 / GEO3)</name>
    <dbReference type="NCBI Taxonomy" id="384616"/>
    <lineage>
        <taxon>Archaea</taxon>
        <taxon>Thermoproteota</taxon>
        <taxon>Thermoprotei</taxon>
        <taxon>Thermoproteales</taxon>
        <taxon>Thermoproteaceae</taxon>
        <taxon>Pyrobaculum</taxon>
    </lineage>
</organism>
<reference key="1">
    <citation type="submission" date="2006-12" db="EMBL/GenBank/DDBJ databases">
        <title>Complete sequence of Pyrobaculum islandicum DSM 4184.</title>
        <authorList>
            <person name="Copeland A."/>
            <person name="Lucas S."/>
            <person name="Lapidus A."/>
            <person name="Barry K."/>
            <person name="Detter J.C."/>
            <person name="Glavina del Rio T."/>
            <person name="Dalin E."/>
            <person name="Tice H."/>
            <person name="Pitluck S."/>
            <person name="Meincke L."/>
            <person name="Brettin T."/>
            <person name="Bruce D."/>
            <person name="Han C."/>
            <person name="Tapia R."/>
            <person name="Gilna P."/>
            <person name="Schmutz J."/>
            <person name="Larimer F."/>
            <person name="Land M."/>
            <person name="Hauser L."/>
            <person name="Kyrpides N."/>
            <person name="Mikhailova N."/>
            <person name="Cozen A.E."/>
            <person name="Fitz-Gibbon S.T."/>
            <person name="House C.H."/>
            <person name="Saltikov C."/>
            <person name="Lowe T."/>
            <person name="Richardson P."/>
        </authorList>
    </citation>
    <scope>NUCLEOTIDE SEQUENCE [LARGE SCALE GENOMIC DNA]</scope>
    <source>
        <strain>DSM 4184 / JCM 9189 / GEO3</strain>
    </source>
</reference>
<comment type="function">
    <text evidence="1">Involved in the gluconeogenesis. Catalyzes stereospecifically the conversion of dihydroxyacetone phosphate (DHAP) to D-glyceraldehyde-3-phosphate (G3P).</text>
</comment>
<comment type="catalytic activity">
    <reaction evidence="1">
        <text>D-glyceraldehyde 3-phosphate = dihydroxyacetone phosphate</text>
        <dbReference type="Rhea" id="RHEA:18585"/>
        <dbReference type="ChEBI" id="CHEBI:57642"/>
        <dbReference type="ChEBI" id="CHEBI:59776"/>
        <dbReference type="EC" id="5.3.1.1"/>
    </reaction>
</comment>
<comment type="pathway">
    <text evidence="1">Carbohydrate biosynthesis; gluconeogenesis.</text>
</comment>
<comment type="pathway">
    <text evidence="1">Carbohydrate degradation; glycolysis; D-glyceraldehyde 3-phosphate from glycerone phosphate: step 1/1.</text>
</comment>
<comment type="subunit">
    <text evidence="1">Homotetramer; dimer of dimers.</text>
</comment>
<comment type="subcellular location">
    <subcellularLocation>
        <location evidence="1">Cytoplasm</location>
    </subcellularLocation>
</comment>
<comment type="similarity">
    <text evidence="1">Belongs to the triosephosphate isomerase family.</text>
</comment>